<feature type="chain" id="PRO_0000315079" description="UDP-N-acetylglucosamine--N-acetylmuramyl-(pentapeptide) pyrophosphoryl-undecaprenol N-acetylglucosamine transferase">
    <location>
        <begin position="1"/>
        <end position="370"/>
    </location>
</feature>
<feature type="binding site" evidence="1">
    <location>
        <begin position="15"/>
        <end position="17"/>
    </location>
    <ligand>
        <name>UDP-N-acetyl-alpha-D-glucosamine</name>
        <dbReference type="ChEBI" id="CHEBI:57705"/>
    </ligand>
</feature>
<feature type="binding site" evidence="1">
    <location>
        <position position="129"/>
    </location>
    <ligand>
        <name>UDP-N-acetyl-alpha-D-glucosamine</name>
        <dbReference type="ChEBI" id="CHEBI:57705"/>
    </ligand>
</feature>
<feature type="binding site" evidence="1">
    <location>
        <position position="171"/>
    </location>
    <ligand>
        <name>UDP-N-acetyl-alpha-D-glucosamine</name>
        <dbReference type="ChEBI" id="CHEBI:57705"/>
    </ligand>
</feature>
<feature type="binding site" evidence="1">
    <location>
        <position position="200"/>
    </location>
    <ligand>
        <name>UDP-N-acetyl-alpha-D-glucosamine</name>
        <dbReference type="ChEBI" id="CHEBI:57705"/>
    </ligand>
</feature>
<feature type="binding site" evidence="1">
    <location>
        <position position="256"/>
    </location>
    <ligand>
        <name>UDP-N-acetyl-alpha-D-glucosamine</name>
        <dbReference type="ChEBI" id="CHEBI:57705"/>
    </ligand>
</feature>
<feature type="binding site" evidence="1">
    <location>
        <position position="301"/>
    </location>
    <ligand>
        <name>UDP-N-acetyl-alpha-D-glucosamine</name>
        <dbReference type="ChEBI" id="CHEBI:57705"/>
    </ligand>
</feature>
<gene>
    <name evidence="1" type="primary">murG</name>
    <name type="ordered locus">Csac_0925</name>
</gene>
<dbReference type="EC" id="2.4.1.227" evidence="1"/>
<dbReference type="EMBL" id="CP000679">
    <property type="protein sequence ID" value="ABP66539.1"/>
    <property type="molecule type" value="Genomic_DNA"/>
</dbReference>
<dbReference type="RefSeq" id="WP_011916485.1">
    <property type="nucleotide sequence ID" value="NC_009437.1"/>
</dbReference>
<dbReference type="SMR" id="A4XI04"/>
<dbReference type="STRING" id="351627.Csac_0925"/>
<dbReference type="CAZy" id="GT28">
    <property type="family name" value="Glycosyltransferase Family 28"/>
</dbReference>
<dbReference type="KEGG" id="csc:Csac_0925"/>
<dbReference type="eggNOG" id="COG0707">
    <property type="taxonomic scope" value="Bacteria"/>
</dbReference>
<dbReference type="HOGENOM" id="CLU_037404_0_1_9"/>
<dbReference type="OrthoDB" id="9808936at2"/>
<dbReference type="UniPathway" id="UPA00219"/>
<dbReference type="Proteomes" id="UP000000256">
    <property type="component" value="Chromosome"/>
</dbReference>
<dbReference type="GO" id="GO:0005886">
    <property type="term" value="C:plasma membrane"/>
    <property type="evidence" value="ECO:0007669"/>
    <property type="project" value="UniProtKB-SubCell"/>
</dbReference>
<dbReference type="GO" id="GO:0051991">
    <property type="term" value="F:UDP-N-acetyl-D-glucosamine:N-acetylmuramoyl-L-alanyl-D-glutamyl-meso-2,6-diaminopimelyl-D-alanyl-D-alanine-diphosphoundecaprenol 4-beta-N-acetylglucosaminlytransferase activity"/>
    <property type="evidence" value="ECO:0007669"/>
    <property type="project" value="RHEA"/>
</dbReference>
<dbReference type="GO" id="GO:0050511">
    <property type="term" value="F:undecaprenyldiphospho-muramoylpentapeptide beta-N-acetylglucosaminyltransferase activity"/>
    <property type="evidence" value="ECO:0007669"/>
    <property type="project" value="UniProtKB-UniRule"/>
</dbReference>
<dbReference type="GO" id="GO:0005975">
    <property type="term" value="P:carbohydrate metabolic process"/>
    <property type="evidence" value="ECO:0007669"/>
    <property type="project" value="InterPro"/>
</dbReference>
<dbReference type="GO" id="GO:0051301">
    <property type="term" value="P:cell division"/>
    <property type="evidence" value="ECO:0007669"/>
    <property type="project" value="UniProtKB-KW"/>
</dbReference>
<dbReference type="GO" id="GO:0071555">
    <property type="term" value="P:cell wall organization"/>
    <property type="evidence" value="ECO:0007669"/>
    <property type="project" value="UniProtKB-KW"/>
</dbReference>
<dbReference type="GO" id="GO:0030259">
    <property type="term" value="P:lipid glycosylation"/>
    <property type="evidence" value="ECO:0007669"/>
    <property type="project" value="UniProtKB-UniRule"/>
</dbReference>
<dbReference type="GO" id="GO:0009252">
    <property type="term" value="P:peptidoglycan biosynthetic process"/>
    <property type="evidence" value="ECO:0007669"/>
    <property type="project" value="UniProtKB-UniRule"/>
</dbReference>
<dbReference type="GO" id="GO:0008360">
    <property type="term" value="P:regulation of cell shape"/>
    <property type="evidence" value="ECO:0007669"/>
    <property type="project" value="UniProtKB-KW"/>
</dbReference>
<dbReference type="CDD" id="cd03785">
    <property type="entry name" value="GT28_MurG"/>
    <property type="match status" value="1"/>
</dbReference>
<dbReference type="Gene3D" id="3.40.50.2000">
    <property type="entry name" value="Glycogen Phosphorylase B"/>
    <property type="match status" value="2"/>
</dbReference>
<dbReference type="HAMAP" id="MF_00033">
    <property type="entry name" value="MurG"/>
    <property type="match status" value="1"/>
</dbReference>
<dbReference type="InterPro" id="IPR006009">
    <property type="entry name" value="GlcNAc_MurG"/>
</dbReference>
<dbReference type="InterPro" id="IPR007235">
    <property type="entry name" value="Glyco_trans_28_C"/>
</dbReference>
<dbReference type="InterPro" id="IPR004276">
    <property type="entry name" value="GlycoTrans_28_N"/>
</dbReference>
<dbReference type="NCBIfam" id="TIGR01133">
    <property type="entry name" value="murG"/>
    <property type="match status" value="1"/>
</dbReference>
<dbReference type="PANTHER" id="PTHR21015:SF22">
    <property type="entry name" value="GLYCOSYLTRANSFERASE"/>
    <property type="match status" value="1"/>
</dbReference>
<dbReference type="PANTHER" id="PTHR21015">
    <property type="entry name" value="UDP-N-ACETYLGLUCOSAMINE--N-ACETYLMURAMYL-(PENTAPEPTIDE) PYROPHOSPHORYL-UNDECAPRENOL N-ACETYLGLUCOSAMINE TRANSFERASE 1"/>
    <property type="match status" value="1"/>
</dbReference>
<dbReference type="Pfam" id="PF04101">
    <property type="entry name" value="Glyco_tran_28_C"/>
    <property type="match status" value="1"/>
</dbReference>
<dbReference type="Pfam" id="PF03033">
    <property type="entry name" value="Glyco_transf_28"/>
    <property type="match status" value="1"/>
</dbReference>
<dbReference type="SUPFAM" id="SSF53756">
    <property type="entry name" value="UDP-Glycosyltransferase/glycogen phosphorylase"/>
    <property type="match status" value="1"/>
</dbReference>
<accession>A4XI04</accession>
<evidence type="ECO:0000255" key="1">
    <source>
        <dbReference type="HAMAP-Rule" id="MF_00033"/>
    </source>
</evidence>
<sequence length="370" mass="40926">MNSGEISIVFSGGGTGGHIYPAVAVADYLKKRYNNLNIVFIGTNEGLESKIVPQHGYKIEYIQAKGLKRSLTVKNVEVFLKFISGYRQALQILKRIKPKVVFVTGGYVSLPVALAARRLKIKTILHEQNAYPGLANKIISRFCEKILISFEESKRFFKNSNKVVLTGNPVRLEIFSHNERAAKSSLGLEDKIIVLAVGGSRGAENLNKAVIRLSKEFEGCKDVYFILSSGDTKYLEAVNFANSLGVKSNIKILPYISDMPRYLAAADIVISRAGAIAISEITALGKPSIIVPSPYVANNHQEYNAKALEKVGACFVVLESELESDKLKSFLEKLIYDKALYERMSESSKKMGKPEATQNIGKIFEEYLSL</sequence>
<protein>
    <recommendedName>
        <fullName evidence="1">UDP-N-acetylglucosamine--N-acetylmuramyl-(pentapeptide) pyrophosphoryl-undecaprenol N-acetylglucosamine transferase</fullName>
        <ecNumber evidence="1">2.4.1.227</ecNumber>
    </recommendedName>
    <alternativeName>
        <fullName evidence="1">Undecaprenyl-PP-MurNAc-pentapeptide-UDPGlcNAc GlcNAc transferase</fullName>
    </alternativeName>
</protein>
<keyword id="KW-0131">Cell cycle</keyword>
<keyword id="KW-0132">Cell division</keyword>
<keyword id="KW-1003">Cell membrane</keyword>
<keyword id="KW-0133">Cell shape</keyword>
<keyword id="KW-0961">Cell wall biogenesis/degradation</keyword>
<keyword id="KW-0328">Glycosyltransferase</keyword>
<keyword id="KW-0472">Membrane</keyword>
<keyword id="KW-0573">Peptidoglycan synthesis</keyword>
<keyword id="KW-0808">Transferase</keyword>
<comment type="function">
    <text evidence="1">Cell wall formation. Catalyzes the transfer of a GlcNAc subunit on undecaprenyl-pyrophosphoryl-MurNAc-pentapeptide (lipid intermediate I) to form undecaprenyl-pyrophosphoryl-MurNAc-(pentapeptide)GlcNAc (lipid intermediate II).</text>
</comment>
<comment type="catalytic activity">
    <reaction evidence="1">
        <text>di-trans,octa-cis-undecaprenyl diphospho-N-acetyl-alpha-D-muramoyl-L-alanyl-D-glutamyl-meso-2,6-diaminopimeloyl-D-alanyl-D-alanine + UDP-N-acetyl-alpha-D-glucosamine = di-trans,octa-cis-undecaprenyl diphospho-[N-acetyl-alpha-D-glucosaminyl-(1-&gt;4)]-N-acetyl-alpha-D-muramoyl-L-alanyl-D-glutamyl-meso-2,6-diaminopimeloyl-D-alanyl-D-alanine + UDP + H(+)</text>
        <dbReference type="Rhea" id="RHEA:31227"/>
        <dbReference type="ChEBI" id="CHEBI:15378"/>
        <dbReference type="ChEBI" id="CHEBI:57705"/>
        <dbReference type="ChEBI" id="CHEBI:58223"/>
        <dbReference type="ChEBI" id="CHEBI:61387"/>
        <dbReference type="ChEBI" id="CHEBI:61388"/>
        <dbReference type="EC" id="2.4.1.227"/>
    </reaction>
</comment>
<comment type="pathway">
    <text evidence="1">Cell wall biogenesis; peptidoglycan biosynthesis.</text>
</comment>
<comment type="subcellular location">
    <subcellularLocation>
        <location evidence="1">Cell membrane</location>
        <topology evidence="1">Peripheral membrane protein</topology>
        <orientation evidence="1">Cytoplasmic side</orientation>
    </subcellularLocation>
</comment>
<comment type="similarity">
    <text evidence="1">Belongs to the glycosyltransferase 28 family. MurG subfamily.</text>
</comment>
<proteinExistence type="inferred from homology"/>
<organism>
    <name type="scientific">Caldicellulosiruptor saccharolyticus (strain ATCC 43494 / DSM 8903 / Tp8T 6331)</name>
    <dbReference type="NCBI Taxonomy" id="351627"/>
    <lineage>
        <taxon>Bacteria</taxon>
        <taxon>Bacillati</taxon>
        <taxon>Bacillota</taxon>
        <taxon>Bacillota incertae sedis</taxon>
        <taxon>Caldicellulosiruptorales</taxon>
        <taxon>Caldicellulosiruptoraceae</taxon>
        <taxon>Caldicellulosiruptor</taxon>
    </lineage>
</organism>
<name>MURG_CALS8</name>
<reference key="1">
    <citation type="submission" date="2007-04" db="EMBL/GenBank/DDBJ databases">
        <title>Genome sequence of the thermophilic hydrogen-producing bacterium Caldicellulosiruptor saccharolyticus DSM 8903.</title>
        <authorList>
            <person name="Copeland A."/>
            <person name="Lucas S."/>
            <person name="Lapidus A."/>
            <person name="Barry K."/>
            <person name="Detter J.C."/>
            <person name="Glavina del Rio T."/>
            <person name="Hammon N."/>
            <person name="Israni S."/>
            <person name="Dalin E."/>
            <person name="Tice H."/>
            <person name="Pitluck S."/>
            <person name="Kiss H."/>
            <person name="Brettin T."/>
            <person name="Bruce D."/>
            <person name="Han C."/>
            <person name="Schmutz J."/>
            <person name="Larimer F."/>
            <person name="Land M."/>
            <person name="Hauser L."/>
            <person name="Kyrpides N."/>
            <person name="Lykidis A."/>
            <person name="van de Werken H.J.G."/>
            <person name="Verhaart M.R.A."/>
            <person name="VanFossen A.L."/>
            <person name="Lewis D.L."/>
            <person name="Nichols J.D."/>
            <person name="Goorissen H.P."/>
            <person name="van Niel E.W.J."/>
            <person name="Stams F.J.M."/>
            <person name="Willquist K.U."/>
            <person name="Ward D.E."/>
            <person name="van der Oost J."/>
            <person name="Kelly R.M."/>
            <person name="Kengen S.M.W."/>
            <person name="Richardson P."/>
        </authorList>
    </citation>
    <scope>NUCLEOTIDE SEQUENCE [LARGE SCALE GENOMIC DNA]</scope>
    <source>
        <strain>ATCC 43494 / DSM 8903 / Tp8T 6331</strain>
    </source>
</reference>